<sequence>MSTNEGSLWGGRFAGGPSDALAALSKSTHFDWVLAPYDLTASRAHTMVLFRAGLLTEEQRDGLLAGLDSLAQDVADGSFGPLVTDEDVHAALERGLIDRVGPDLGGRLRAGRSRNDQVAALFRMWLRDAVRRVATGVLDVVGALAEQAAAHPSAIMPGKTHLQSAQPILLAHHLLAHAHPLLRDLDRIVDFDKRAAVSPYGSGALAGSSLGLDPDAIAADLGFSAAADNSVDATAARDFAAEAAFVFAMIAVDLSRLAEDIIVWSSTEFGYVTLHDSWSTGSSIMPQKKNPDIAELARGKSGRLIGNLAGLLATLKAQPLAYNRDLQEDKEPVFDSVAQLELLLPAMAGLVASLTFNVQRMAELAPAGYTLATDLAEWLVRQGVPFRSAHEAAGAAVRAAEQRGVGLQELTDDELAAISPELTPQVREVLTIEGSVSARDCRGGTAPGRVAEQLNAIGEAAERLRRQLVR</sequence>
<evidence type="ECO:0000255" key="1">
    <source>
        <dbReference type="HAMAP-Rule" id="MF_00006"/>
    </source>
</evidence>
<proteinExistence type="inferred from homology"/>
<name>ARLY_MYCBP</name>
<accession>A1KJ76</accession>
<comment type="catalytic activity">
    <reaction evidence="1">
        <text>2-(N(omega)-L-arginino)succinate = fumarate + L-arginine</text>
        <dbReference type="Rhea" id="RHEA:24020"/>
        <dbReference type="ChEBI" id="CHEBI:29806"/>
        <dbReference type="ChEBI" id="CHEBI:32682"/>
        <dbReference type="ChEBI" id="CHEBI:57472"/>
        <dbReference type="EC" id="4.3.2.1"/>
    </reaction>
</comment>
<comment type="pathway">
    <text evidence="1">Amino-acid biosynthesis; L-arginine biosynthesis; L-arginine from L-ornithine and carbamoyl phosphate: step 3/3.</text>
</comment>
<comment type="subcellular location">
    <subcellularLocation>
        <location evidence="1">Cytoplasm</location>
    </subcellularLocation>
</comment>
<comment type="similarity">
    <text evidence="1">Belongs to the lyase 1 family. Argininosuccinate lyase subfamily.</text>
</comment>
<keyword id="KW-0028">Amino-acid biosynthesis</keyword>
<keyword id="KW-0055">Arginine biosynthesis</keyword>
<keyword id="KW-0963">Cytoplasm</keyword>
<keyword id="KW-0456">Lyase</keyword>
<reference key="1">
    <citation type="journal article" date="2007" name="Proc. Natl. Acad. Sci. U.S.A.">
        <title>Genome plasticity of BCG and impact on vaccine efficacy.</title>
        <authorList>
            <person name="Brosch R."/>
            <person name="Gordon S.V."/>
            <person name="Garnier T."/>
            <person name="Eiglmeier K."/>
            <person name="Frigui W."/>
            <person name="Valenti P."/>
            <person name="Dos Santos S."/>
            <person name="Duthoy S."/>
            <person name="Lacroix C."/>
            <person name="Garcia-Pelayo C."/>
            <person name="Inwald J.K."/>
            <person name="Golby P."/>
            <person name="Garcia J.N."/>
            <person name="Hewinson R.G."/>
            <person name="Behr M.A."/>
            <person name="Quail M.A."/>
            <person name="Churcher C."/>
            <person name="Barrell B.G."/>
            <person name="Parkhill J."/>
            <person name="Cole S.T."/>
        </authorList>
    </citation>
    <scope>NUCLEOTIDE SEQUENCE [LARGE SCALE GENOMIC DNA]</scope>
    <source>
        <strain>BCG / Pasteur 1173P2</strain>
    </source>
</reference>
<protein>
    <recommendedName>
        <fullName evidence="1">Argininosuccinate lyase</fullName>
        <shortName evidence="1">ASAL</shortName>
        <ecNumber evidence="1">4.3.2.1</ecNumber>
    </recommendedName>
    <alternativeName>
        <fullName evidence="1">Arginosuccinase</fullName>
    </alternativeName>
</protein>
<gene>
    <name evidence="1" type="primary">argH</name>
    <name type="ordered locus">BCG_1698</name>
</gene>
<organism>
    <name type="scientific">Mycobacterium bovis (strain BCG / Pasteur 1173P2)</name>
    <dbReference type="NCBI Taxonomy" id="410289"/>
    <lineage>
        <taxon>Bacteria</taxon>
        <taxon>Bacillati</taxon>
        <taxon>Actinomycetota</taxon>
        <taxon>Actinomycetes</taxon>
        <taxon>Mycobacteriales</taxon>
        <taxon>Mycobacteriaceae</taxon>
        <taxon>Mycobacterium</taxon>
        <taxon>Mycobacterium tuberculosis complex</taxon>
    </lineage>
</organism>
<dbReference type="EC" id="4.3.2.1" evidence="1"/>
<dbReference type="EMBL" id="AM408590">
    <property type="protein sequence ID" value="CAL71685.1"/>
    <property type="molecule type" value="Genomic_DNA"/>
</dbReference>
<dbReference type="RefSeq" id="WP_003408180.1">
    <property type="nucleotide sequence ID" value="NC_008769.1"/>
</dbReference>
<dbReference type="SMR" id="A1KJ76"/>
<dbReference type="KEGG" id="mbb:BCG_1698"/>
<dbReference type="HOGENOM" id="CLU_027272_2_2_11"/>
<dbReference type="UniPathway" id="UPA00068">
    <property type="reaction ID" value="UER00114"/>
</dbReference>
<dbReference type="Proteomes" id="UP000001472">
    <property type="component" value="Chromosome"/>
</dbReference>
<dbReference type="GO" id="GO:0005829">
    <property type="term" value="C:cytosol"/>
    <property type="evidence" value="ECO:0007669"/>
    <property type="project" value="TreeGrafter"/>
</dbReference>
<dbReference type="GO" id="GO:0004056">
    <property type="term" value="F:argininosuccinate lyase activity"/>
    <property type="evidence" value="ECO:0007669"/>
    <property type="project" value="UniProtKB-UniRule"/>
</dbReference>
<dbReference type="GO" id="GO:0042450">
    <property type="term" value="P:arginine biosynthetic process via ornithine"/>
    <property type="evidence" value="ECO:0007669"/>
    <property type="project" value="InterPro"/>
</dbReference>
<dbReference type="GO" id="GO:0006526">
    <property type="term" value="P:L-arginine biosynthetic process"/>
    <property type="evidence" value="ECO:0007669"/>
    <property type="project" value="UniProtKB-UniRule"/>
</dbReference>
<dbReference type="CDD" id="cd01359">
    <property type="entry name" value="Argininosuccinate_lyase"/>
    <property type="match status" value="1"/>
</dbReference>
<dbReference type="FunFam" id="1.10.40.30:FF:000001">
    <property type="entry name" value="Argininosuccinate lyase"/>
    <property type="match status" value="1"/>
</dbReference>
<dbReference type="FunFam" id="1.20.200.10:FF:000015">
    <property type="entry name" value="argininosuccinate lyase isoform X2"/>
    <property type="match status" value="1"/>
</dbReference>
<dbReference type="Gene3D" id="1.10.40.30">
    <property type="entry name" value="Fumarase/aspartase (C-terminal domain)"/>
    <property type="match status" value="1"/>
</dbReference>
<dbReference type="Gene3D" id="1.20.200.10">
    <property type="entry name" value="Fumarase/aspartase (Central domain)"/>
    <property type="match status" value="1"/>
</dbReference>
<dbReference type="Gene3D" id="1.10.275.10">
    <property type="entry name" value="Fumarase/aspartase (N-terminal domain)"/>
    <property type="match status" value="1"/>
</dbReference>
<dbReference type="HAMAP" id="MF_00006">
    <property type="entry name" value="Arg_succ_lyase"/>
    <property type="match status" value="1"/>
</dbReference>
<dbReference type="InterPro" id="IPR029419">
    <property type="entry name" value="Arg_succ_lyase_C"/>
</dbReference>
<dbReference type="InterPro" id="IPR009049">
    <property type="entry name" value="Argininosuccinate_lyase"/>
</dbReference>
<dbReference type="InterPro" id="IPR024083">
    <property type="entry name" value="Fumarase/histidase_N"/>
</dbReference>
<dbReference type="InterPro" id="IPR020557">
    <property type="entry name" value="Fumarate_lyase_CS"/>
</dbReference>
<dbReference type="InterPro" id="IPR000362">
    <property type="entry name" value="Fumarate_lyase_fam"/>
</dbReference>
<dbReference type="InterPro" id="IPR022761">
    <property type="entry name" value="Fumarate_lyase_N"/>
</dbReference>
<dbReference type="InterPro" id="IPR008948">
    <property type="entry name" value="L-Aspartase-like"/>
</dbReference>
<dbReference type="NCBIfam" id="TIGR00838">
    <property type="entry name" value="argH"/>
    <property type="match status" value="1"/>
</dbReference>
<dbReference type="PANTHER" id="PTHR43814">
    <property type="entry name" value="ARGININOSUCCINATE LYASE"/>
    <property type="match status" value="1"/>
</dbReference>
<dbReference type="PANTHER" id="PTHR43814:SF1">
    <property type="entry name" value="ARGININOSUCCINATE LYASE"/>
    <property type="match status" value="1"/>
</dbReference>
<dbReference type="Pfam" id="PF14698">
    <property type="entry name" value="ASL_C2"/>
    <property type="match status" value="1"/>
</dbReference>
<dbReference type="Pfam" id="PF00206">
    <property type="entry name" value="Lyase_1"/>
    <property type="match status" value="1"/>
</dbReference>
<dbReference type="PRINTS" id="PR00145">
    <property type="entry name" value="ARGSUCLYASE"/>
</dbReference>
<dbReference type="PRINTS" id="PR00149">
    <property type="entry name" value="FUMRATELYASE"/>
</dbReference>
<dbReference type="SUPFAM" id="SSF48557">
    <property type="entry name" value="L-aspartase-like"/>
    <property type="match status" value="1"/>
</dbReference>
<dbReference type="PROSITE" id="PS00163">
    <property type="entry name" value="FUMARATE_LYASES"/>
    <property type="match status" value="1"/>
</dbReference>
<feature type="chain" id="PRO_1000000505" description="Argininosuccinate lyase">
    <location>
        <begin position="1"/>
        <end position="470"/>
    </location>
</feature>